<evidence type="ECO:0000255" key="1"/>
<evidence type="ECO:0000256" key="2">
    <source>
        <dbReference type="SAM" id="MobiDB-lite"/>
    </source>
</evidence>
<evidence type="ECO:0000305" key="3"/>
<gene>
    <name type="ordered locus">MIMI_R455</name>
</gene>
<proteinExistence type="predicted"/>
<reference key="1">
    <citation type="journal article" date="2004" name="Science">
        <title>The 1.2-megabase genome sequence of Mimivirus.</title>
        <authorList>
            <person name="Raoult D."/>
            <person name="Audic S."/>
            <person name="Robert C."/>
            <person name="Abergel C."/>
            <person name="Renesto P."/>
            <person name="Ogata H."/>
            <person name="La Scola B."/>
            <person name="Susan M."/>
            <person name="Claverie J.-M."/>
        </authorList>
    </citation>
    <scope>NUCLEOTIDE SEQUENCE [LARGE SCALE GENOMIC DNA]</scope>
    <source>
        <strain>Rowbotham-Bradford</strain>
    </source>
</reference>
<sequence>MYELMENKQRKFWFYVRKGIFQVLLQLVLAMMTVWDFAGQNNTGTSYNKLYFYTSFLLVLYTGLKQILEYMFSICSEEVVFKKQFNNSRSRDILMSFDMLNSPSGHYIVTTKRIFKLRYSKSNLFIKIDKLCWFLGIDSPVLIPFNIIEKLGNIKDNLTTNNEDIYLNVTLTNLHKYQNDENDTEEDSEDIEKNSDPKENSDIDSLIPKVIETETDLNIKELQSELFRKV</sequence>
<dbReference type="EMBL" id="AY653733">
    <property type="protein sequence ID" value="AAV50721.1"/>
    <property type="molecule type" value="Genomic_DNA"/>
</dbReference>
<dbReference type="KEGG" id="vg:9925080"/>
<dbReference type="OrthoDB" id="20320at10239"/>
<dbReference type="Proteomes" id="UP000001134">
    <property type="component" value="Genome"/>
</dbReference>
<dbReference type="GO" id="GO:0016020">
    <property type="term" value="C:membrane"/>
    <property type="evidence" value="ECO:0007669"/>
    <property type="project" value="UniProtKB-SubCell"/>
</dbReference>
<name>YR455_MIMIV</name>
<feature type="chain" id="PRO_0000253450" description="Uncharacterized protein R455">
    <location>
        <begin position="1"/>
        <end position="230"/>
    </location>
</feature>
<feature type="transmembrane region" description="Helical" evidence="1">
    <location>
        <begin position="19"/>
        <end position="39"/>
    </location>
</feature>
<feature type="transmembrane region" description="Helical" evidence="1">
    <location>
        <begin position="55"/>
        <end position="75"/>
    </location>
</feature>
<feature type="region of interest" description="Disordered" evidence="2">
    <location>
        <begin position="178"/>
        <end position="205"/>
    </location>
</feature>
<feature type="coiled-coil region" evidence="1">
    <location>
        <begin position="172"/>
        <end position="196"/>
    </location>
</feature>
<feature type="compositionally biased region" description="Acidic residues" evidence="2">
    <location>
        <begin position="180"/>
        <end position="190"/>
    </location>
</feature>
<feature type="compositionally biased region" description="Basic and acidic residues" evidence="2">
    <location>
        <begin position="191"/>
        <end position="201"/>
    </location>
</feature>
<feature type="glycosylation site" description="N-linked (GlcNAc...) asparagine; by host" evidence="1">
    <location>
        <position position="41"/>
    </location>
</feature>
<feature type="glycosylation site" description="N-linked (GlcNAc...) asparagine; by host" evidence="1">
    <location>
        <position position="86"/>
    </location>
</feature>
<feature type="glycosylation site" description="N-linked (GlcNAc...) asparagine; by host" evidence="1">
    <location>
        <position position="157"/>
    </location>
</feature>
<feature type="glycosylation site" description="N-linked (GlcNAc...) asparagine; by host" evidence="1">
    <location>
        <position position="168"/>
    </location>
</feature>
<feature type="glycosylation site" description="N-linked (GlcNAc...) asparagine; by host" evidence="1">
    <location>
        <position position="182"/>
    </location>
</feature>
<organism>
    <name type="scientific">Acanthamoeba polyphaga mimivirus</name>
    <name type="common">APMV</name>
    <dbReference type="NCBI Taxonomy" id="212035"/>
    <lineage>
        <taxon>Viruses</taxon>
        <taxon>Varidnaviria</taxon>
        <taxon>Bamfordvirae</taxon>
        <taxon>Nucleocytoviricota</taxon>
        <taxon>Megaviricetes</taxon>
        <taxon>Imitervirales</taxon>
        <taxon>Mimiviridae</taxon>
        <taxon>Megamimivirinae</taxon>
        <taxon>Mimivirus</taxon>
        <taxon>Mimivirus bradfordmassiliense</taxon>
    </lineage>
</organism>
<keyword id="KW-0175">Coiled coil</keyword>
<keyword id="KW-0325">Glycoprotein</keyword>
<keyword id="KW-0472">Membrane</keyword>
<keyword id="KW-1185">Reference proteome</keyword>
<keyword id="KW-0812">Transmembrane</keyword>
<keyword id="KW-1133">Transmembrane helix</keyword>
<accession>Q5UQP7</accession>
<comment type="subcellular location">
    <subcellularLocation>
        <location evidence="3">Membrane</location>
        <topology evidence="3">Multi-pass membrane protein</topology>
    </subcellularLocation>
</comment>
<organismHost>
    <name type="scientific">Acanthamoeba polyphaga</name>
    <name type="common">Amoeba</name>
    <dbReference type="NCBI Taxonomy" id="5757"/>
</organismHost>
<protein>
    <recommendedName>
        <fullName>Uncharacterized protein R455</fullName>
    </recommendedName>
</protein>